<dbReference type="EC" id="2.7.1.33" evidence="1"/>
<dbReference type="EMBL" id="CR954246">
    <property type="protein sequence ID" value="CAI87947.1"/>
    <property type="molecule type" value="Genomic_DNA"/>
</dbReference>
<dbReference type="SMR" id="Q3IJV0"/>
<dbReference type="STRING" id="326442.PSHAa2912"/>
<dbReference type="KEGG" id="pha:PSHAa2912"/>
<dbReference type="PATRIC" id="fig|326442.8.peg.2810"/>
<dbReference type="eggNOG" id="COG1521">
    <property type="taxonomic scope" value="Bacteria"/>
</dbReference>
<dbReference type="HOGENOM" id="CLU_066627_0_0_6"/>
<dbReference type="BioCyc" id="PHAL326442:PSHA_RS14305-MONOMER"/>
<dbReference type="UniPathway" id="UPA00241">
    <property type="reaction ID" value="UER00352"/>
</dbReference>
<dbReference type="Proteomes" id="UP000006843">
    <property type="component" value="Chromosome I"/>
</dbReference>
<dbReference type="GO" id="GO:0005737">
    <property type="term" value="C:cytoplasm"/>
    <property type="evidence" value="ECO:0007669"/>
    <property type="project" value="UniProtKB-SubCell"/>
</dbReference>
<dbReference type="GO" id="GO:0005524">
    <property type="term" value="F:ATP binding"/>
    <property type="evidence" value="ECO:0007669"/>
    <property type="project" value="UniProtKB-UniRule"/>
</dbReference>
<dbReference type="GO" id="GO:0046872">
    <property type="term" value="F:metal ion binding"/>
    <property type="evidence" value="ECO:0007669"/>
    <property type="project" value="UniProtKB-KW"/>
</dbReference>
<dbReference type="GO" id="GO:0004594">
    <property type="term" value="F:pantothenate kinase activity"/>
    <property type="evidence" value="ECO:0007669"/>
    <property type="project" value="UniProtKB-UniRule"/>
</dbReference>
<dbReference type="GO" id="GO:0015937">
    <property type="term" value="P:coenzyme A biosynthetic process"/>
    <property type="evidence" value="ECO:0007669"/>
    <property type="project" value="UniProtKB-UniRule"/>
</dbReference>
<dbReference type="CDD" id="cd24015">
    <property type="entry name" value="ASKHA_NBD_PanK-III"/>
    <property type="match status" value="1"/>
</dbReference>
<dbReference type="Gene3D" id="3.30.420.40">
    <property type="match status" value="2"/>
</dbReference>
<dbReference type="HAMAP" id="MF_01274">
    <property type="entry name" value="Pantothen_kinase_3"/>
    <property type="match status" value="1"/>
</dbReference>
<dbReference type="InterPro" id="IPR043129">
    <property type="entry name" value="ATPase_NBD"/>
</dbReference>
<dbReference type="InterPro" id="IPR004619">
    <property type="entry name" value="Type_III_PanK"/>
</dbReference>
<dbReference type="NCBIfam" id="TIGR00671">
    <property type="entry name" value="baf"/>
    <property type="match status" value="1"/>
</dbReference>
<dbReference type="NCBIfam" id="NF009860">
    <property type="entry name" value="PRK13322.1-5"/>
    <property type="match status" value="1"/>
</dbReference>
<dbReference type="PANTHER" id="PTHR34265">
    <property type="entry name" value="TYPE III PANTOTHENATE KINASE"/>
    <property type="match status" value="1"/>
</dbReference>
<dbReference type="PANTHER" id="PTHR34265:SF1">
    <property type="entry name" value="TYPE III PANTOTHENATE KINASE"/>
    <property type="match status" value="1"/>
</dbReference>
<dbReference type="Pfam" id="PF03309">
    <property type="entry name" value="Pan_kinase"/>
    <property type="match status" value="1"/>
</dbReference>
<dbReference type="SUPFAM" id="SSF53067">
    <property type="entry name" value="Actin-like ATPase domain"/>
    <property type="match status" value="2"/>
</dbReference>
<evidence type="ECO:0000255" key="1">
    <source>
        <dbReference type="HAMAP-Rule" id="MF_01274"/>
    </source>
</evidence>
<sequence>MKLLIDVGNTSLKAKLWQNEQVQACDLNNLPWHAITHVIYACVGRSELLNAILAQAAFNSISCFEAKVTKTLGGLTCAYEHFNNLGIDRWLALIASFTLYPNKACIVVDAGTATTIDVLNCDGQHLGGWILPGLDLMTRSLTQNTQRVFDDENTPFTNQLGINTPNGLKNGALVATIGAINQAKPYLNDKNTQIIFAGGYGSLLQQQFKESIFDPMLVIKGLNYWYELDENSNKL</sequence>
<keyword id="KW-0067">ATP-binding</keyword>
<keyword id="KW-0173">Coenzyme A biosynthesis</keyword>
<keyword id="KW-0963">Cytoplasm</keyword>
<keyword id="KW-0418">Kinase</keyword>
<keyword id="KW-0479">Metal-binding</keyword>
<keyword id="KW-0547">Nucleotide-binding</keyword>
<keyword id="KW-0630">Potassium</keyword>
<keyword id="KW-1185">Reference proteome</keyword>
<keyword id="KW-0808">Transferase</keyword>
<protein>
    <recommendedName>
        <fullName evidence="1">Type III pantothenate kinase</fullName>
        <ecNumber evidence="1">2.7.1.33</ecNumber>
    </recommendedName>
    <alternativeName>
        <fullName evidence="1">PanK-III</fullName>
    </alternativeName>
    <alternativeName>
        <fullName evidence="1">Pantothenic acid kinase</fullName>
    </alternativeName>
</protein>
<accession>Q3IJV0</accession>
<gene>
    <name evidence="1" type="primary">coaX</name>
    <name type="ordered locus">PSHAa2912</name>
</gene>
<comment type="function">
    <text evidence="1">Catalyzes the phosphorylation of pantothenate (Pan), the first step in CoA biosynthesis.</text>
</comment>
<comment type="catalytic activity">
    <reaction evidence="1">
        <text>(R)-pantothenate + ATP = (R)-4'-phosphopantothenate + ADP + H(+)</text>
        <dbReference type="Rhea" id="RHEA:16373"/>
        <dbReference type="ChEBI" id="CHEBI:10986"/>
        <dbReference type="ChEBI" id="CHEBI:15378"/>
        <dbReference type="ChEBI" id="CHEBI:29032"/>
        <dbReference type="ChEBI" id="CHEBI:30616"/>
        <dbReference type="ChEBI" id="CHEBI:456216"/>
        <dbReference type="EC" id="2.7.1.33"/>
    </reaction>
</comment>
<comment type="cofactor">
    <cofactor evidence="1">
        <name>NH4(+)</name>
        <dbReference type="ChEBI" id="CHEBI:28938"/>
    </cofactor>
    <cofactor evidence="1">
        <name>K(+)</name>
        <dbReference type="ChEBI" id="CHEBI:29103"/>
    </cofactor>
    <text evidence="1">A monovalent cation. Ammonium or potassium.</text>
</comment>
<comment type="pathway">
    <text evidence="1">Cofactor biosynthesis; coenzyme A biosynthesis; CoA from (R)-pantothenate: step 1/5.</text>
</comment>
<comment type="subunit">
    <text evidence="1">Homodimer.</text>
</comment>
<comment type="subcellular location">
    <subcellularLocation>
        <location evidence="1">Cytoplasm</location>
    </subcellularLocation>
</comment>
<comment type="similarity">
    <text evidence="1">Belongs to the type III pantothenate kinase family.</text>
</comment>
<proteinExistence type="inferred from homology"/>
<reference key="1">
    <citation type="journal article" date="2005" name="Genome Res.">
        <title>Coping with cold: the genome of the versatile marine Antarctica bacterium Pseudoalteromonas haloplanktis TAC125.</title>
        <authorList>
            <person name="Medigue C."/>
            <person name="Krin E."/>
            <person name="Pascal G."/>
            <person name="Barbe V."/>
            <person name="Bernsel A."/>
            <person name="Bertin P.N."/>
            <person name="Cheung F."/>
            <person name="Cruveiller S."/>
            <person name="D'Amico S."/>
            <person name="Duilio A."/>
            <person name="Fang G."/>
            <person name="Feller G."/>
            <person name="Ho C."/>
            <person name="Mangenot S."/>
            <person name="Marino G."/>
            <person name="Nilsson J."/>
            <person name="Parrilli E."/>
            <person name="Rocha E.P.C."/>
            <person name="Rouy Z."/>
            <person name="Sekowska A."/>
            <person name="Tutino M.L."/>
            <person name="Vallenet D."/>
            <person name="von Heijne G."/>
            <person name="Danchin A."/>
        </authorList>
    </citation>
    <scope>NUCLEOTIDE SEQUENCE [LARGE SCALE GENOMIC DNA]</scope>
    <source>
        <strain>TAC 125</strain>
    </source>
</reference>
<organism>
    <name type="scientific">Pseudoalteromonas translucida (strain TAC 125)</name>
    <dbReference type="NCBI Taxonomy" id="326442"/>
    <lineage>
        <taxon>Bacteria</taxon>
        <taxon>Pseudomonadati</taxon>
        <taxon>Pseudomonadota</taxon>
        <taxon>Gammaproteobacteria</taxon>
        <taxon>Alteromonadales</taxon>
        <taxon>Pseudoalteromonadaceae</taxon>
        <taxon>Pseudoalteromonas</taxon>
    </lineage>
</organism>
<name>COAX_PSET1</name>
<feature type="chain" id="PRO_0000270891" description="Type III pantothenate kinase">
    <location>
        <begin position="1"/>
        <end position="235"/>
    </location>
</feature>
<feature type="active site" description="Proton acceptor" evidence="1">
    <location>
        <position position="88"/>
    </location>
</feature>
<feature type="binding site" evidence="1">
    <location>
        <begin position="6"/>
        <end position="13"/>
    </location>
    <ligand>
        <name>ATP</name>
        <dbReference type="ChEBI" id="CHEBI:30616"/>
    </ligand>
</feature>
<feature type="binding site" evidence="1">
    <location>
        <position position="79"/>
    </location>
    <ligand>
        <name>substrate</name>
    </ligand>
</feature>
<feature type="binding site" evidence="1">
    <location>
        <begin position="86"/>
        <end position="89"/>
    </location>
    <ligand>
        <name>substrate</name>
    </ligand>
</feature>
<feature type="binding site" evidence="1">
    <location>
        <position position="109"/>
    </location>
    <ligand>
        <name>K(+)</name>
        <dbReference type="ChEBI" id="CHEBI:29103"/>
    </ligand>
</feature>
<feature type="binding site" evidence="1">
    <location>
        <position position="112"/>
    </location>
    <ligand>
        <name>ATP</name>
        <dbReference type="ChEBI" id="CHEBI:30616"/>
    </ligand>
</feature>
<feature type="binding site" evidence="1">
    <location>
        <position position="164"/>
    </location>
    <ligand>
        <name>substrate</name>
    </ligand>
</feature>